<protein>
    <recommendedName>
        <fullName>Maleylacetoacetate isomerase</fullName>
        <shortName>MAAI</shortName>
        <ecNumber>5.2.1.2</ecNumber>
    </recommendedName>
    <alternativeName>
        <fullName>GSTZ1-1</fullName>
    </alternativeName>
    <alternativeName>
        <fullName>Glutathione S-transferase zeta 1</fullName>
        <ecNumber>2.5.1.18</ecNumber>
    </alternativeName>
</protein>
<organism>
    <name type="scientific">Mus musculus</name>
    <name type="common">Mouse</name>
    <dbReference type="NCBI Taxonomy" id="10090"/>
    <lineage>
        <taxon>Eukaryota</taxon>
        <taxon>Metazoa</taxon>
        <taxon>Chordata</taxon>
        <taxon>Craniata</taxon>
        <taxon>Vertebrata</taxon>
        <taxon>Euteleostomi</taxon>
        <taxon>Mammalia</taxon>
        <taxon>Eutheria</taxon>
        <taxon>Euarchontoglires</taxon>
        <taxon>Glires</taxon>
        <taxon>Rodentia</taxon>
        <taxon>Myomorpha</taxon>
        <taxon>Muroidea</taxon>
        <taxon>Muridae</taxon>
        <taxon>Murinae</taxon>
        <taxon>Mus</taxon>
        <taxon>Mus</taxon>
    </lineage>
</organism>
<reference key="1">
    <citation type="journal article" date="1999" name="Genomics">
        <title>Gene structure, chromosomal location, and expression pattern of maleylacetoacetate isomerase.</title>
        <authorList>
            <person name="Fernandez-Canon J.M."/>
            <person name="Hejna J."/>
            <person name="Reifsteck C."/>
            <person name="Olson S."/>
            <person name="Grompe M."/>
        </authorList>
    </citation>
    <scope>NUCLEOTIDE SEQUENCE [MRNA]</scope>
</reference>
<reference key="2">
    <citation type="journal article" date="2005" name="Science">
        <title>The transcriptional landscape of the mammalian genome.</title>
        <authorList>
            <person name="Carninci P."/>
            <person name="Kasukawa T."/>
            <person name="Katayama S."/>
            <person name="Gough J."/>
            <person name="Frith M.C."/>
            <person name="Maeda N."/>
            <person name="Oyama R."/>
            <person name="Ravasi T."/>
            <person name="Lenhard B."/>
            <person name="Wells C."/>
            <person name="Kodzius R."/>
            <person name="Shimokawa K."/>
            <person name="Bajic V.B."/>
            <person name="Brenner S.E."/>
            <person name="Batalov S."/>
            <person name="Forrest A.R."/>
            <person name="Zavolan M."/>
            <person name="Davis M.J."/>
            <person name="Wilming L.G."/>
            <person name="Aidinis V."/>
            <person name="Allen J.E."/>
            <person name="Ambesi-Impiombato A."/>
            <person name="Apweiler R."/>
            <person name="Aturaliya R.N."/>
            <person name="Bailey T.L."/>
            <person name="Bansal M."/>
            <person name="Baxter L."/>
            <person name="Beisel K.W."/>
            <person name="Bersano T."/>
            <person name="Bono H."/>
            <person name="Chalk A.M."/>
            <person name="Chiu K.P."/>
            <person name="Choudhary V."/>
            <person name="Christoffels A."/>
            <person name="Clutterbuck D.R."/>
            <person name="Crowe M.L."/>
            <person name="Dalla E."/>
            <person name="Dalrymple B.P."/>
            <person name="de Bono B."/>
            <person name="Della Gatta G."/>
            <person name="di Bernardo D."/>
            <person name="Down T."/>
            <person name="Engstrom P."/>
            <person name="Fagiolini M."/>
            <person name="Faulkner G."/>
            <person name="Fletcher C.F."/>
            <person name="Fukushima T."/>
            <person name="Furuno M."/>
            <person name="Futaki S."/>
            <person name="Gariboldi M."/>
            <person name="Georgii-Hemming P."/>
            <person name="Gingeras T.R."/>
            <person name="Gojobori T."/>
            <person name="Green R.E."/>
            <person name="Gustincich S."/>
            <person name="Harbers M."/>
            <person name="Hayashi Y."/>
            <person name="Hensch T.K."/>
            <person name="Hirokawa N."/>
            <person name="Hill D."/>
            <person name="Huminiecki L."/>
            <person name="Iacono M."/>
            <person name="Ikeo K."/>
            <person name="Iwama A."/>
            <person name="Ishikawa T."/>
            <person name="Jakt M."/>
            <person name="Kanapin A."/>
            <person name="Katoh M."/>
            <person name="Kawasawa Y."/>
            <person name="Kelso J."/>
            <person name="Kitamura H."/>
            <person name="Kitano H."/>
            <person name="Kollias G."/>
            <person name="Krishnan S.P."/>
            <person name="Kruger A."/>
            <person name="Kummerfeld S.K."/>
            <person name="Kurochkin I.V."/>
            <person name="Lareau L.F."/>
            <person name="Lazarevic D."/>
            <person name="Lipovich L."/>
            <person name="Liu J."/>
            <person name="Liuni S."/>
            <person name="McWilliam S."/>
            <person name="Madan Babu M."/>
            <person name="Madera M."/>
            <person name="Marchionni L."/>
            <person name="Matsuda H."/>
            <person name="Matsuzawa S."/>
            <person name="Miki H."/>
            <person name="Mignone F."/>
            <person name="Miyake S."/>
            <person name="Morris K."/>
            <person name="Mottagui-Tabar S."/>
            <person name="Mulder N."/>
            <person name="Nakano N."/>
            <person name="Nakauchi H."/>
            <person name="Ng P."/>
            <person name="Nilsson R."/>
            <person name="Nishiguchi S."/>
            <person name="Nishikawa S."/>
            <person name="Nori F."/>
            <person name="Ohara O."/>
            <person name="Okazaki Y."/>
            <person name="Orlando V."/>
            <person name="Pang K.C."/>
            <person name="Pavan W.J."/>
            <person name="Pavesi G."/>
            <person name="Pesole G."/>
            <person name="Petrovsky N."/>
            <person name="Piazza S."/>
            <person name="Reed J."/>
            <person name="Reid J.F."/>
            <person name="Ring B.Z."/>
            <person name="Ringwald M."/>
            <person name="Rost B."/>
            <person name="Ruan Y."/>
            <person name="Salzberg S.L."/>
            <person name="Sandelin A."/>
            <person name="Schneider C."/>
            <person name="Schoenbach C."/>
            <person name="Sekiguchi K."/>
            <person name="Semple C.A."/>
            <person name="Seno S."/>
            <person name="Sessa L."/>
            <person name="Sheng Y."/>
            <person name="Shibata Y."/>
            <person name="Shimada H."/>
            <person name="Shimada K."/>
            <person name="Silva D."/>
            <person name="Sinclair B."/>
            <person name="Sperling S."/>
            <person name="Stupka E."/>
            <person name="Sugiura K."/>
            <person name="Sultana R."/>
            <person name="Takenaka Y."/>
            <person name="Taki K."/>
            <person name="Tammoja K."/>
            <person name="Tan S.L."/>
            <person name="Tang S."/>
            <person name="Taylor M.S."/>
            <person name="Tegner J."/>
            <person name="Teichmann S.A."/>
            <person name="Ueda H.R."/>
            <person name="van Nimwegen E."/>
            <person name="Verardo R."/>
            <person name="Wei C.L."/>
            <person name="Yagi K."/>
            <person name="Yamanishi H."/>
            <person name="Zabarovsky E."/>
            <person name="Zhu S."/>
            <person name="Zimmer A."/>
            <person name="Hide W."/>
            <person name="Bult C."/>
            <person name="Grimmond S.M."/>
            <person name="Teasdale R.D."/>
            <person name="Liu E.T."/>
            <person name="Brusic V."/>
            <person name="Quackenbush J."/>
            <person name="Wahlestedt C."/>
            <person name="Mattick J.S."/>
            <person name="Hume D.A."/>
            <person name="Kai C."/>
            <person name="Sasaki D."/>
            <person name="Tomaru Y."/>
            <person name="Fukuda S."/>
            <person name="Kanamori-Katayama M."/>
            <person name="Suzuki M."/>
            <person name="Aoki J."/>
            <person name="Arakawa T."/>
            <person name="Iida J."/>
            <person name="Imamura K."/>
            <person name="Itoh M."/>
            <person name="Kato T."/>
            <person name="Kawaji H."/>
            <person name="Kawagashira N."/>
            <person name="Kawashima T."/>
            <person name="Kojima M."/>
            <person name="Kondo S."/>
            <person name="Konno H."/>
            <person name="Nakano K."/>
            <person name="Ninomiya N."/>
            <person name="Nishio T."/>
            <person name="Okada M."/>
            <person name="Plessy C."/>
            <person name="Shibata K."/>
            <person name="Shiraki T."/>
            <person name="Suzuki S."/>
            <person name="Tagami M."/>
            <person name="Waki K."/>
            <person name="Watahiki A."/>
            <person name="Okamura-Oho Y."/>
            <person name="Suzuki H."/>
            <person name="Kawai J."/>
            <person name="Hayashizaki Y."/>
        </authorList>
    </citation>
    <scope>NUCLEOTIDE SEQUENCE [LARGE SCALE MRNA]</scope>
    <source>
        <strain>C57BL/6J</strain>
        <tissue>Kidney</tissue>
    </source>
</reference>
<reference key="3">
    <citation type="journal article" date="2004" name="Genome Res.">
        <title>The status, quality, and expansion of the NIH full-length cDNA project: the Mammalian Gene Collection (MGC).</title>
        <authorList>
            <consortium name="The MGC Project Team"/>
        </authorList>
    </citation>
    <scope>NUCLEOTIDE SEQUENCE [LARGE SCALE MRNA]</scope>
    <source>
        <strain>FVB/N</strain>
        <tissue>Salivary gland</tissue>
    </source>
</reference>
<reference key="4">
    <citation type="journal article" date="2007" name="Proc. Natl. Acad. Sci. U.S.A.">
        <title>Large-scale phosphorylation analysis of mouse liver.</title>
        <authorList>
            <person name="Villen J."/>
            <person name="Beausoleil S.A."/>
            <person name="Gerber S.A."/>
            <person name="Gygi S.P."/>
        </authorList>
    </citation>
    <scope>PHOSPHORYLATION [LARGE SCALE ANALYSIS] AT THR-136 AND SER-181</scope>
    <scope>IDENTIFICATION BY MASS SPECTROMETRY [LARGE SCALE ANALYSIS]</scope>
    <source>
        <tissue>Liver</tissue>
    </source>
</reference>
<reference key="5">
    <citation type="journal article" date="2010" name="Cell">
        <title>A tissue-specific atlas of mouse protein phosphorylation and expression.</title>
        <authorList>
            <person name="Huttlin E.L."/>
            <person name="Jedrychowski M.P."/>
            <person name="Elias J.E."/>
            <person name="Goswami T."/>
            <person name="Rad R."/>
            <person name="Beausoleil S.A."/>
            <person name="Villen J."/>
            <person name="Haas W."/>
            <person name="Sowa M.E."/>
            <person name="Gygi S.P."/>
        </authorList>
    </citation>
    <scope>PHOSPHORYLATION [LARGE SCALE ANALYSIS] AT SER-137</scope>
    <scope>IDENTIFICATION BY MASS SPECTROMETRY [LARGE SCALE ANALYSIS]</scope>
    <source>
        <tissue>Brain</tissue>
        <tissue>Brown adipose tissue</tissue>
        <tissue>Heart</tissue>
        <tissue>Kidney</tissue>
        <tissue>Liver</tissue>
        <tissue>Lung</tissue>
        <tissue>Pancreas</tissue>
        <tissue>Spleen</tissue>
        <tissue>Testis</tissue>
    </source>
</reference>
<reference key="6">
    <citation type="journal article" date="2013" name="Mol. Cell">
        <title>SIRT5-mediated lysine desuccinylation impacts diverse metabolic pathways.</title>
        <authorList>
            <person name="Park J."/>
            <person name="Chen Y."/>
            <person name="Tishkoff D.X."/>
            <person name="Peng C."/>
            <person name="Tan M."/>
            <person name="Dai L."/>
            <person name="Xie Z."/>
            <person name="Zhang Y."/>
            <person name="Zwaans B.M."/>
            <person name="Skinner M.E."/>
            <person name="Lombard D.B."/>
            <person name="Zhao Y."/>
        </authorList>
    </citation>
    <scope>SUCCINYLATION [LARGE SCALE ANALYSIS] AT LYS-57 AND LYS-177</scope>
    <scope>IDENTIFICATION BY MASS SPECTROMETRY [LARGE SCALE ANALYSIS]</scope>
    <source>
        <tissue>Liver</tissue>
    </source>
</reference>
<reference key="7">
    <citation type="submission" date="2009-02" db="PDB data bank">
        <title>Crystal structure of glutathione transferase zeta 1-1 (maleylacetoacetate isomerase) from Mus musculus (form-1 crystal).</title>
        <authorList>
            <consortium name="RIKEN structural genomics initiative (RSGI)"/>
        </authorList>
    </citation>
    <scope>X-RAY CRYSTALLOGRAPHY (1.4 ANGSTROMS) IN COMPLEX WITH GLUTATHIONE</scope>
    <scope>SUBUNIT</scope>
</reference>
<comment type="function">
    <text evidence="1">Probable bifunctional enzyme showing minimal glutathione-conjugating activity with ethacrynic acid and 7-chloro-4-nitrobenz-2-oxa-1, 3-diazole and maleylacetoacetate isomerase activity. Also has low glutathione peroxidase activity with t-butyl and cumene hydroperoxides. Is able to catalyze the glutathione dependent oxygenation of dichloroacetic acid to glyoxylic acid (By similarity).</text>
</comment>
<comment type="catalytic activity">
    <reaction>
        <text>4-maleylacetoacetate = 4-fumarylacetoacetate</text>
        <dbReference type="Rhea" id="RHEA:14817"/>
        <dbReference type="ChEBI" id="CHEBI:17105"/>
        <dbReference type="ChEBI" id="CHEBI:18034"/>
        <dbReference type="EC" id="5.2.1.2"/>
    </reaction>
</comment>
<comment type="catalytic activity">
    <reaction>
        <text>RX + glutathione = an S-substituted glutathione + a halide anion + H(+)</text>
        <dbReference type="Rhea" id="RHEA:16437"/>
        <dbReference type="ChEBI" id="CHEBI:15378"/>
        <dbReference type="ChEBI" id="CHEBI:16042"/>
        <dbReference type="ChEBI" id="CHEBI:17792"/>
        <dbReference type="ChEBI" id="CHEBI:57925"/>
        <dbReference type="ChEBI" id="CHEBI:90779"/>
        <dbReference type="EC" id="2.5.1.18"/>
    </reaction>
</comment>
<comment type="cofactor">
    <cofactor evidence="1">
        <name>glutathione</name>
        <dbReference type="ChEBI" id="CHEBI:57925"/>
    </cofactor>
    <text evidence="1">Glutathione is required for the MAAI activity.</text>
</comment>
<comment type="pathway">
    <text>Amino-acid degradation; L-phenylalanine degradation; acetoacetate and fumarate from L-phenylalanine: step 5/6.</text>
</comment>
<comment type="subunit">
    <text evidence="5">Homodimer.</text>
</comment>
<comment type="subcellular location">
    <subcellularLocation>
        <location evidence="1">Cytoplasm</location>
    </subcellularLocation>
</comment>
<comment type="tissue specificity">
    <text>Expressed in liver, kidney, seminal glands and breast.</text>
</comment>
<comment type="similarity">
    <text evidence="4">Belongs to the GST superfamily. Zeta family.</text>
</comment>
<proteinExistence type="evidence at protein level"/>
<sequence>MQAGKPILYSYFRSSCSWRVRIALALKGIDYEIVPINLIKDGGQQFTEEFQTLNPMKQVPALKIDGITIVQSLAIMEYLEETRPIPRLLPQDPQKRAIVRMISDLIASGIQPLQNLSVLKQVGQENQMQWAQKVITSGFNALEKILQSTAGKYCVGDEVSMADVCLVPQVANAERFKVDLSPYPTISHINKELLALEVFQVSHPRRQPDTPAELRT</sequence>
<name>MAAI_MOUSE</name>
<gene>
    <name type="primary">Gstz1</name>
    <name type="synonym">Maai</name>
</gene>
<evidence type="ECO:0000250" key="1"/>
<evidence type="ECO:0000250" key="2">
    <source>
        <dbReference type="UniProtKB" id="O43708"/>
    </source>
</evidence>
<evidence type="ECO:0000269" key="3">
    <source ref="7"/>
</evidence>
<evidence type="ECO:0000305" key="4"/>
<evidence type="ECO:0000305" key="5">
    <source ref="7"/>
</evidence>
<evidence type="ECO:0007744" key="6">
    <source>
    </source>
</evidence>
<evidence type="ECO:0007744" key="7">
    <source>
    </source>
</evidence>
<evidence type="ECO:0007744" key="8">
    <source>
    </source>
</evidence>
<evidence type="ECO:0007829" key="9">
    <source>
        <dbReference type="PDB" id="2CZ2"/>
    </source>
</evidence>
<feature type="chain" id="PRO_0000186023" description="Maleylacetoacetate isomerase">
    <location>
        <begin position="1"/>
        <end position="216"/>
    </location>
</feature>
<feature type="domain" description="GST N-terminal">
    <location>
        <begin position="4"/>
        <end position="87"/>
    </location>
</feature>
<feature type="domain" description="GST C-terminal">
    <location>
        <begin position="92"/>
        <end position="212"/>
    </location>
</feature>
<feature type="binding site">
    <location>
        <begin position="14"/>
        <end position="19"/>
    </location>
    <ligand>
        <name>glutathione</name>
        <dbReference type="ChEBI" id="CHEBI:57925"/>
    </ligand>
</feature>
<feature type="binding site" evidence="3">
    <location>
        <position position="45"/>
    </location>
    <ligand>
        <name>glutathione</name>
        <dbReference type="ChEBI" id="CHEBI:57925"/>
    </ligand>
</feature>
<feature type="binding site" evidence="3">
    <location>
        <position position="59"/>
    </location>
    <ligand>
        <name>glutathione</name>
        <dbReference type="ChEBI" id="CHEBI:57925"/>
    </ligand>
</feature>
<feature type="binding site">
    <location>
        <begin position="71"/>
        <end position="72"/>
    </location>
    <ligand>
        <name>glutathione</name>
        <dbReference type="ChEBI" id="CHEBI:57925"/>
    </ligand>
</feature>
<feature type="binding site" evidence="3">
    <location>
        <position position="111"/>
    </location>
    <ligand>
        <name>glutathione</name>
        <dbReference type="ChEBI" id="CHEBI:57925"/>
    </ligand>
</feature>
<feature type="binding site">
    <location>
        <begin position="115"/>
        <end position="117"/>
    </location>
    <ligand>
        <name>glutathione</name>
        <dbReference type="ChEBI" id="CHEBI:57925"/>
    </ligand>
</feature>
<feature type="modified residue" description="N-acetylmethionine" evidence="2">
    <location>
        <position position="1"/>
    </location>
</feature>
<feature type="modified residue" description="N6-succinyllysine" evidence="8">
    <location>
        <position position="57"/>
    </location>
</feature>
<feature type="modified residue" description="Phosphothreonine" evidence="6">
    <location>
        <position position="136"/>
    </location>
</feature>
<feature type="modified residue" description="Phosphoserine" evidence="7">
    <location>
        <position position="137"/>
    </location>
</feature>
<feature type="modified residue" description="N6-succinyllysine" evidence="8">
    <location>
        <position position="177"/>
    </location>
</feature>
<feature type="modified residue" description="Phosphoserine" evidence="6">
    <location>
        <position position="181"/>
    </location>
</feature>
<feature type="strand" evidence="9">
    <location>
        <begin position="7"/>
        <end position="10"/>
    </location>
</feature>
<feature type="helix" evidence="9">
    <location>
        <begin position="15"/>
        <end position="26"/>
    </location>
</feature>
<feature type="strand" evidence="9">
    <location>
        <begin position="32"/>
        <end position="35"/>
    </location>
</feature>
<feature type="helix" evidence="9">
    <location>
        <begin position="40"/>
        <end position="42"/>
    </location>
</feature>
<feature type="helix" evidence="9">
    <location>
        <begin position="44"/>
        <end position="46"/>
    </location>
</feature>
<feature type="helix" evidence="9">
    <location>
        <begin position="48"/>
        <end position="53"/>
    </location>
</feature>
<feature type="strand" evidence="9">
    <location>
        <begin position="61"/>
        <end position="64"/>
    </location>
</feature>
<feature type="strand" evidence="9">
    <location>
        <begin position="67"/>
        <end position="71"/>
    </location>
</feature>
<feature type="helix" evidence="9">
    <location>
        <begin position="72"/>
        <end position="82"/>
    </location>
</feature>
<feature type="helix" evidence="9">
    <location>
        <begin position="93"/>
        <end position="109"/>
    </location>
</feature>
<feature type="helix" evidence="9">
    <location>
        <begin position="111"/>
        <end position="114"/>
    </location>
</feature>
<feature type="helix" evidence="9">
    <location>
        <begin position="116"/>
        <end position="122"/>
    </location>
</feature>
<feature type="turn" evidence="9">
    <location>
        <begin position="124"/>
        <end position="126"/>
    </location>
</feature>
<feature type="helix" evidence="9">
    <location>
        <begin position="127"/>
        <end position="149"/>
    </location>
</feature>
<feature type="strand" evidence="9">
    <location>
        <begin position="150"/>
        <end position="156"/>
    </location>
</feature>
<feature type="helix" evidence="9">
    <location>
        <begin position="161"/>
        <end position="175"/>
    </location>
</feature>
<feature type="helix" evidence="9">
    <location>
        <begin position="184"/>
        <end position="194"/>
    </location>
</feature>
<feature type="helix" evidence="9">
    <location>
        <begin position="197"/>
        <end position="200"/>
    </location>
</feature>
<feature type="helix" evidence="9">
    <location>
        <begin position="204"/>
        <end position="206"/>
    </location>
</feature>
<accession>Q9WVL0</accession>
<dbReference type="EC" id="5.2.1.2"/>
<dbReference type="EC" id="2.5.1.18"/>
<dbReference type="EMBL" id="AF093418">
    <property type="protein sequence ID" value="AAD43846.1"/>
    <property type="molecule type" value="mRNA"/>
</dbReference>
<dbReference type="EMBL" id="AK002398">
    <property type="protein sequence ID" value="BAB22070.1"/>
    <property type="molecule type" value="mRNA"/>
</dbReference>
<dbReference type="EMBL" id="AK075927">
    <property type="protein sequence ID" value="BAC36059.1"/>
    <property type="molecule type" value="mRNA"/>
</dbReference>
<dbReference type="EMBL" id="BC031777">
    <property type="protein sequence ID" value="AAH31777.1"/>
    <property type="molecule type" value="mRNA"/>
</dbReference>
<dbReference type="CCDS" id="CCDS26071.1"/>
<dbReference type="RefSeq" id="NP_001239484.1">
    <property type="nucleotide sequence ID" value="NM_001252555.1"/>
</dbReference>
<dbReference type="RefSeq" id="NP_001239485.1">
    <property type="nucleotide sequence ID" value="NM_001252556.1"/>
</dbReference>
<dbReference type="RefSeq" id="NP_034493.1">
    <property type="nucleotide sequence ID" value="NM_010363.4"/>
</dbReference>
<dbReference type="PDB" id="2CZ2">
    <property type="method" value="X-ray"/>
    <property type="resolution" value="1.40 A"/>
    <property type="chains" value="A=1-216"/>
</dbReference>
<dbReference type="PDB" id="2CZ3">
    <property type="method" value="X-ray"/>
    <property type="resolution" value="2.30 A"/>
    <property type="chains" value="A/B=1-216"/>
</dbReference>
<dbReference type="PDBsum" id="2CZ2"/>
<dbReference type="PDBsum" id="2CZ3"/>
<dbReference type="SMR" id="Q9WVL0"/>
<dbReference type="BioGRID" id="200105">
    <property type="interactions" value="3"/>
</dbReference>
<dbReference type="FunCoup" id="Q9WVL0">
    <property type="interactions" value="1554"/>
</dbReference>
<dbReference type="STRING" id="10090.ENSMUSP00000053540"/>
<dbReference type="GlyGen" id="Q9WVL0">
    <property type="glycosylation" value="1 site, 1 O-linked glycan (1 site)"/>
</dbReference>
<dbReference type="iPTMnet" id="Q9WVL0"/>
<dbReference type="PhosphoSitePlus" id="Q9WVL0"/>
<dbReference type="SwissPalm" id="Q9WVL0"/>
<dbReference type="jPOST" id="Q9WVL0"/>
<dbReference type="PaxDb" id="10090-ENSMUSP00000053540"/>
<dbReference type="PeptideAtlas" id="Q9WVL0"/>
<dbReference type="ProteomicsDB" id="252709"/>
<dbReference type="Pumba" id="Q9WVL0"/>
<dbReference type="TopDownProteomics" id="Q9WVL0"/>
<dbReference type="Antibodypedia" id="188">
    <property type="antibodies" value="240 antibodies from 29 providers"/>
</dbReference>
<dbReference type="DNASU" id="14874"/>
<dbReference type="Ensembl" id="ENSMUST00000063117.10">
    <property type="protein sequence ID" value="ENSMUSP00000053540.9"/>
    <property type="gene ID" value="ENSMUSG00000021033.12"/>
</dbReference>
<dbReference type="GeneID" id="14874"/>
<dbReference type="KEGG" id="mmu:14874"/>
<dbReference type="UCSC" id="uc007oil.1">
    <property type="organism name" value="mouse"/>
</dbReference>
<dbReference type="AGR" id="MGI:1341859"/>
<dbReference type="CTD" id="2954"/>
<dbReference type="MGI" id="MGI:1341859">
    <property type="gene designation" value="Gstz1"/>
</dbReference>
<dbReference type="VEuPathDB" id="HostDB:ENSMUSG00000021033"/>
<dbReference type="eggNOG" id="KOG0868">
    <property type="taxonomic scope" value="Eukaryota"/>
</dbReference>
<dbReference type="GeneTree" id="ENSGT00390000006580"/>
<dbReference type="HOGENOM" id="CLU_011226_20_1_1"/>
<dbReference type="InParanoid" id="Q9WVL0"/>
<dbReference type="OMA" id="VYNAHRF"/>
<dbReference type="OrthoDB" id="202840at2759"/>
<dbReference type="PhylomeDB" id="Q9WVL0"/>
<dbReference type="TreeFam" id="TF105324"/>
<dbReference type="Reactome" id="R-MMU-156590">
    <property type="pathway name" value="Glutathione conjugation"/>
</dbReference>
<dbReference type="Reactome" id="R-MMU-204174">
    <property type="pathway name" value="Regulation of pyruvate dehydrogenase (PDH) complex"/>
</dbReference>
<dbReference type="Reactome" id="R-MMU-8963684">
    <property type="pathway name" value="Tyrosine catabolism"/>
</dbReference>
<dbReference type="UniPathway" id="UPA00139">
    <property type="reaction ID" value="UER00340"/>
</dbReference>
<dbReference type="BioGRID-ORCS" id="14874">
    <property type="hits" value="2 hits in 80 CRISPR screens"/>
</dbReference>
<dbReference type="ChiTaRS" id="Gstz1">
    <property type="organism name" value="mouse"/>
</dbReference>
<dbReference type="EvolutionaryTrace" id="Q9WVL0"/>
<dbReference type="PRO" id="PR:Q9WVL0"/>
<dbReference type="Proteomes" id="UP000000589">
    <property type="component" value="Chromosome 12"/>
</dbReference>
<dbReference type="RNAct" id="Q9WVL0">
    <property type="molecule type" value="protein"/>
</dbReference>
<dbReference type="Bgee" id="ENSMUSG00000021033">
    <property type="expression patterns" value="Expressed in gonadal fat pad and 267 other cell types or tissues"/>
</dbReference>
<dbReference type="ExpressionAtlas" id="Q9WVL0">
    <property type="expression patterns" value="baseline and differential"/>
</dbReference>
<dbReference type="GO" id="GO:0005739">
    <property type="term" value="C:mitochondrion"/>
    <property type="evidence" value="ECO:0000314"/>
    <property type="project" value="UniProtKB"/>
</dbReference>
<dbReference type="GO" id="GO:0004364">
    <property type="term" value="F:glutathione transferase activity"/>
    <property type="evidence" value="ECO:0000304"/>
    <property type="project" value="MGI"/>
</dbReference>
<dbReference type="GO" id="GO:0016034">
    <property type="term" value="F:maleylacetoacetate isomerase activity"/>
    <property type="evidence" value="ECO:0000266"/>
    <property type="project" value="MGI"/>
</dbReference>
<dbReference type="GO" id="GO:0006559">
    <property type="term" value="P:L-phenylalanine catabolic process"/>
    <property type="evidence" value="ECO:0000304"/>
    <property type="project" value="MGI"/>
</dbReference>
<dbReference type="GO" id="GO:0006572">
    <property type="term" value="P:tyrosine catabolic process"/>
    <property type="evidence" value="ECO:0000304"/>
    <property type="project" value="MGI"/>
</dbReference>
<dbReference type="CDD" id="cd03191">
    <property type="entry name" value="GST_C_Zeta"/>
    <property type="match status" value="1"/>
</dbReference>
<dbReference type="CDD" id="cd03042">
    <property type="entry name" value="GST_N_Zeta"/>
    <property type="match status" value="1"/>
</dbReference>
<dbReference type="FunFam" id="1.20.1050.10:FF:000010">
    <property type="entry name" value="Maleylacetoacetate isomerase isoform 1"/>
    <property type="match status" value="1"/>
</dbReference>
<dbReference type="FunFam" id="3.40.30.10:FF:000041">
    <property type="entry name" value="Maleylacetoacetate isomerase isoform 1"/>
    <property type="match status" value="1"/>
</dbReference>
<dbReference type="Gene3D" id="1.20.1050.10">
    <property type="match status" value="1"/>
</dbReference>
<dbReference type="Gene3D" id="3.40.30.10">
    <property type="entry name" value="Glutaredoxin"/>
    <property type="match status" value="1"/>
</dbReference>
<dbReference type="InterPro" id="IPR010987">
    <property type="entry name" value="Glutathione-S-Trfase_C-like"/>
</dbReference>
<dbReference type="InterPro" id="IPR036282">
    <property type="entry name" value="Glutathione-S-Trfase_C_sf"/>
</dbReference>
<dbReference type="InterPro" id="IPR040079">
    <property type="entry name" value="Glutathione_S-Trfase"/>
</dbReference>
<dbReference type="InterPro" id="IPR004045">
    <property type="entry name" value="Glutathione_S-Trfase_N"/>
</dbReference>
<dbReference type="InterPro" id="IPR004046">
    <property type="entry name" value="GST_C"/>
</dbReference>
<dbReference type="InterPro" id="IPR005955">
    <property type="entry name" value="GST_Zeta"/>
</dbReference>
<dbReference type="InterPro" id="IPR034330">
    <property type="entry name" value="GST_Zeta_C"/>
</dbReference>
<dbReference type="InterPro" id="IPR034333">
    <property type="entry name" value="GST_Zeta_N"/>
</dbReference>
<dbReference type="InterPro" id="IPR036249">
    <property type="entry name" value="Thioredoxin-like_sf"/>
</dbReference>
<dbReference type="NCBIfam" id="TIGR01262">
    <property type="entry name" value="maiA"/>
    <property type="match status" value="1"/>
</dbReference>
<dbReference type="PANTHER" id="PTHR42673">
    <property type="entry name" value="MALEYLACETOACETATE ISOMERASE"/>
    <property type="match status" value="1"/>
</dbReference>
<dbReference type="PANTHER" id="PTHR42673:SF4">
    <property type="entry name" value="MALEYLACETOACETATE ISOMERASE"/>
    <property type="match status" value="1"/>
</dbReference>
<dbReference type="Pfam" id="PF14497">
    <property type="entry name" value="GST_C_3"/>
    <property type="match status" value="1"/>
</dbReference>
<dbReference type="Pfam" id="PF02798">
    <property type="entry name" value="GST_N"/>
    <property type="match status" value="1"/>
</dbReference>
<dbReference type="SFLD" id="SFLDS00019">
    <property type="entry name" value="Glutathione_Transferase_(cytos"/>
    <property type="match status" value="1"/>
</dbReference>
<dbReference type="SFLD" id="SFLDG00358">
    <property type="entry name" value="Main_(cytGST)"/>
    <property type="match status" value="1"/>
</dbReference>
<dbReference type="SUPFAM" id="SSF47616">
    <property type="entry name" value="GST C-terminal domain-like"/>
    <property type="match status" value="1"/>
</dbReference>
<dbReference type="SUPFAM" id="SSF52833">
    <property type="entry name" value="Thioredoxin-like"/>
    <property type="match status" value="1"/>
</dbReference>
<dbReference type="PROSITE" id="PS50405">
    <property type="entry name" value="GST_CTER"/>
    <property type="match status" value="1"/>
</dbReference>
<dbReference type="PROSITE" id="PS50404">
    <property type="entry name" value="GST_NTER"/>
    <property type="match status" value="1"/>
</dbReference>
<keyword id="KW-0002">3D-structure</keyword>
<keyword id="KW-0007">Acetylation</keyword>
<keyword id="KW-0963">Cytoplasm</keyword>
<keyword id="KW-0413">Isomerase</keyword>
<keyword id="KW-0511">Multifunctional enzyme</keyword>
<keyword id="KW-0585">Phenylalanine catabolism</keyword>
<keyword id="KW-0597">Phosphoprotein</keyword>
<keyword id="KW-1185">Reference proteome</keyword>
<keyword id="KW-0808">Transferase</keyword>
<keyword id="KW-0828">Tyrosine catabolism</keyword>